<name>CH60_BUCTC</name>
<evidence type="ECO:0000255" key="1">
    <source>
        <dbReference type="HAMAP-Rule" id="MF_00600"/>
    </source>
</evidence>
<evidence type="ECO:0000256" key="2">
    <source>
        <dbReference type="SAM" id="MobiDB-lite"/>
    </source>
</evidence>
<keyword id="KW-0067">ATP-binding</keyword>
<keyword id="KW-0143">Chaperone</keyword>
<keyword id="KW-0963">Cytoplasm</keyword>
<keyword id="KW-0413">Isomerase</keyword>
<keyword id="KW-0547">Nucleotide-binding</keyword>
<gene>
    <name evidence="1" type="primary">groEL</name>
    <name evidence="1" type="synonym">groL</name>
</gene>
<sequence length="547" mass="58162">MAAKDVKFGNEARVKMLRGVNVLADAVKVTLGPKGRNVVLDKSFGAPSITKDGVSVAREIELEDKFENMGAQMVKEVASKANDVAGDGTTTATLLAQAIVNEGLKAVAAGMNPMDLKRGIDKAVINAVSELKQLSVPCLDSKAITQVGTISANADETVGTLISEAMEKVGNDGVITVEEGTGLEDELEVVKGMQFDRGYLSPYFINKPETGIVELENPYILMVDKKISNIRELLPILEAVAKSSKPLLIISEDLEGEALATLVVKSMRGIVKVAAVKAPGFGDRRKAMLQDISILTAGTLISEELAMDLEKSTLEDLGQSKRVVITKDTTTIIDGSGSKKDIKNRISQIKQQIQESTSDYDKEKLNERLAKLSGGVAVLKVGAATEVEMKEKKARVEDALHATRAAVEEGVVPGGGVALVRVAQKISKILGQNEDQNVGIRVALRAMEAPLRQIVSNSGEEPSVVTNNVKDGIGNYGYNAATDEYGDMIKFGILDPTKVTRSALQYAGSVAGLMITTECMVTDLPKEEKSDLSVPPQGGMGGMGGMM</sequence>
<protein>
    <recommendedName>
        <fullName evidence="1">Chaperonin GroEL</fullName>
        <ecNumber evidence="1">5.6.1.7</ecNumber>
    </recommendedName>
    <alternativeName>
        <fullName evidence="1">60 kDa chaperonin</fullName>
    </alternativeName>
    <alternativeName>
        <fullName evidence="1">Chaperonin-60</fullName>
        <shortName evidence="1">Cpn60</shortName>
    </alternativeName>
</protein>
<feature type="chain" id="PRO_0000063313" description="Chaperonin GroEL">
    <location>
        <begin position="1"/>
        <end position="547"/>
    </location>
</feature>
<feature type="region of interest" description="Disordered" evidence="2">
    <location>
        <begin position="526"/>
        <end position="547"/>
    </location>
</feature>
<feature type="compositionally biased region" description="Gly residues" evidence="2">
    <location>
        <begin position="538"/>
        <end position="547"/>
    </location>
</feature>
<feature type="binding site" evidence="1">
    <location>
        <begin position="30"/>
        <end position="33"/>
    </location>
    <ligand>
        <name>ATP</name>
        <dbReference type="ChEBI" id="CHEBI:30616"/>
    </ligand>
</feature>
<feature type="binding site" evidence="1">
    <location>
        <position position="51"/>
    </location>
    <ligand>
        <name>ATP</name>
        <dbReference type="ChEBI" id="CHEBI:30616"/>
    </ligand>
</feature>
<feature type="binding site" evidence="1">
    <location>
        <begin position="87"/>
        <end position="91"/>
    </location>
    <ligand>
        <name>ATP</name>
        <dbReference type="ChEBI" id="CHEBI:30616"/>
    </ligand>
</feature>
<feature type="binding site" evidence="1">
    <location>
        <position position="415"/>
    </location>
    <ligand>
        <name>ATP</name>
        <dbReference type="ChEBI" id="CHEBI:30616"/>
    </ligand>
</feature>
<feature type="binding site" evidence="1">
    <location>
        <begin position="479"/>
        <end position="481"/>
    </location>
    <ligand>
        <name>ATP</name>
        <dbReference type="ChEBI" id="CHEBI:30616"/>
    </ligand>
</feature>
<feature type="binding site" evidence="1">
    <location>
        <position position="495"/>
    </location>
    <ligand>
        <name>ATP</name>
        <dbReference type="ChEBI" id="CHEBI:30616"/>
    </ligand>
</feature>
<comment type="function">
    <text evidence="1">Together with its co-chaperonin GroES, plays an essential role in assisting protein folding. The GroEL-GroES system forms a nano-cage that allows encapsulation of the non-native substrate proteins and provides a physical environment optimized to promote and accelerate protein folding.</text>
</comment>
<comment type="catalytic activity">
    <reaction evidence="1">
        <text>ATP + H2O + a folded polypeptide = ADP + phosphate + an unfolded polypeptide.</text>
        <dbReference type="EC" id="5.6.1.7"/>
    </reaction>
</comment>
<comment type="subunit">
    <text evidence="1">Forms a cylinder of 14 subunits composed of two heptameric rings stacked back-to-back. Interacts with the co-chaperonin GroES.</text>
</comment>
<comment type="subcellular location">
    <subcellularLocation>
        <location evidence="1">Cytoplasm</location>
    </subcellularLocation>
</comment>
<comment type="similarity">
    <text evidence="1">Belongs to the chaperonin (HSP60) family.</text>
</comment>
<dbReference type="EC" id="5.6.1.7" evidence="1"/>
<dbReference type="EMBL" id="AJ439084">
    <property type="protein sequence ID" value="CAD27796.1"/>
    <property type="molecule type" value="Genomic_DNA"/>
</dbReference>
<dbReference type="SMR" id="Q8KIX3"/>
<dbReference type="GO" id="GO:0005737">
    <property type="term" value="C:cytoplasm"/>
    <property type="evidence" value="ECO:0007669"/>
    <property type="project" value="UniProtKB-SubCell"/>
</dbReference>
<dbReference type="GO" id="GO:0005524">
    <property type="term" value="F:ATP binding"/>
    <property type="evidence" value="ECO:0007669"/>
    <property type="project" value="UniProtKB-UniRule"/>
</dbReference>
<dbReference type="GO" id="GO:0140662">
    <property type="term" value="F:ATP-dependent protein folding chaperone"/>
    <property type="evidence" value="ECO:0007669"/>
    <property type="project" value="InterPro"/>
</dbReference>
<dbReference type="GO" id="GO:0016853">
    <property type="term" value="F:isomerase activity"/>
    <property type="evidence" value="ECO:0007669"/>
    <property type="project" value="UniProtKB-KW"/>
</dbReference>
<dbReference type="GO" id="GO:0051082">
    <property type="term" value="F:unfolded protein binding"/>
    <property type="evidence" value="ECO:0007669"/>
    <property type="project" value="UniProtKB-UniRule"/>
</dbReference>
<dbReference type="GO" id="GO:0042026">
    <property type="term" value="P:protein refolding"/>
    <property type="evidence" value="ECO:0007669"/>
    <property type="project" value="UniProtKB-UniRule"/>
</dbReference>
<dbReference type="CDD" id="cd03344">
    <property type="entry name" value="GroEL"/>
    <property type="match status" value="1"/>
</dbReference>
<dbReference type="FunFam" id="1.10.560.10:FF:000001">
    <property type="entry name" value="60 kDa chaperonin"/>
    <property type="match status" value="1"/>
</dbReference>
<dbReference type="FunFam" id="3.50.7.10:FF:000001">
    <property type="entry name" value="60 kDa chaperonin"/>
    <property type="match status" value="1"/>
</dbReference>
<dbReference type="Gene3D" id="3.50.7.10">
    <property type="entry name" value="GroEL"/>
    <property type="match status" value="1"/>
</dbReference>
<dbReference type="Gene3D" id="1.10.560.10">
    <property type="entry name" value="GroEL-like equatorial domain"/>
    <property type="match status" value="1"/>
</dbReference>
<dbReference type="Gene3D" id="3.30.260.10">
    <property type="entry name" value="TCP-1-like chaperonin intermediate domain"/>
    <property type="match status" value="1"/>
</dbReference>
<dbReference type="HAMAP" id="MF_00600">
    <property type="entry name" value="CH60"/>
    <property type="match status" value="1"/>
</dbReference>
<dbReference type="InterPro" id="IPR018370">
    <property type="entry name" value="Chaperonin_Cpn60_CS"/>
</dbReference>
<dbReference type="InterPro" id="IPR001844">
    <property type="entry name" value="Cpn60/GroEL"/>
</dbReference>
<dbReference type="InterPro" id="IPR002423">
    <property type="entry name" value="Cpn60/GroEL/TCP-1"/>
</dbReference>
<dbReference type="InterPro" id="IPR027409">
    <property type="entry name" value="GroEL-like_apical_dom_sf"/>
</dbReference>
<dbReference type="InterPro" id="IPR027413">
    <property type="entry name" value="GROEL-like_equatorial_sf"/>
</dbReference>
<dbReference type="InterPro" id="IPR027410">
    <property type="entry name" value="TCP-1-like_intermed_sf"/>
</dbReference>
<dbReference type="NCBIfam" id="TIGR02348">
    <property type="entry name" value="GroEL"/>
    <property type="match status" value="1"/>
</dbReference>
<dbReference type="NCBIfam" id="NF000592">
    <property type="entry name" value="PRK00013.1"/>
    <property type="match status" value="1"/>
</dbReference>
<dbReference type="NCBIfam" id="NF009487">
    <property type="entry name" value="PRK12849.1"/>
    <property type="match status" value="1"/>
</dbReference>
<dbReference type="NCBIfam" id="NF009488">
    <property type="entry name" value="PRK12850.1"/>
    <property type="match status" value="1"/>
</dbReference>
<dbReference type="NCBIfam" id="NF009489">
    <property type="entry name" value="PRK12851.1"/>
    <property type="match status" value="1"/>
</dbReference>
<dbReference type="PANTHER" id="PTHR45633">
    <property type="entry name" value="60 KDA HEAT SHOCK PROTEIN, MITOCHONDRIAL"/>
    <property type="match status" value="1"/>
</dbReference>
<dbReference type="Pfam" id="PF00118">
    <property type="entry name" value="Cpn60_TCP1"/>
    <property type="match status" value="1"/>
</dbReference>
<dbReference type="PRINTS" id="PR00298">
    <property type="entry name" value="CHAPERONIN60"/>
</dbReference>
<dbReference type="SUPFAM" id="SSF52029">
    <property type="entry name" value="GroEL apical domain-like"/>
    <property type="match status" value="1"/>
</dbReference>
<dbReference type="SUPFAM" id="SSF48592">
    <property type="entry name" value="GroEL equatorial domain-like"/>
    <property type="match status" value="1"/>
</dbReference>
<dbReference type="SUPFAM" id="SSF54849">
    <property type="entry name" value="GroEL-intermediate domain like"/>
    <property type="match status" value="1"/>
</dbReference>
<dbReference type="PROSITE" id="PS00296">
    <property type="entry name" value="CHAPERONINS_CPN60"/>
    <property type="match status" value="1"/>
</dbReference>
<organism>
    <name type="scientific">Buchnera aphidicola subsp. Tetraneura caerulescens</name>
    <dbReference type="NCBI Taxonomy" id="118111"/>
    <lineage>
        <taxon>Bacteria</taxon>
        <taxon>Pseudomonadati</taxon>
        <taxon>Pseudomonadota</taxon>
        <taxon>Gammaproteobacteria</taxon>
        <taxon>Enterobacterales</taxon>
        <taxon>Erwiniaceae</taxon>
        <taxon>Buchnera</taxon>
    </lineage>
</organism>
<proteinExistence type="inferred from homology"/>
<reference key="1">
    <citation type="journal article" date="2002" name="Mol. Biol. Evol.">
        <title>The evolution of the heat-shock protein GroEL from Buchnera, the primary endosymbiont of aphids, is governed by positive selection.</title>
        <authorList>
            <person name="Fares M.A."/>
            <person name="Barrio E."/>
            <person name="Sabater-Munoz B."/>
            <person name="Moya A."/>
        </authorList>
    </citation>
    <scope>NUCLEOTIDE SEQUENCE [GENOMIC DNA]</scope>
</reference>
<accession>Q8KIX3</accession>